<dbReference type="EMBL" id="CP000058">
    <property type="protein sequence ID" value="AAZ35361.1"/>
    <property type="molecule type" value="Genomic_DNA"/>
</dbReference>
<dbReference type="RefSeq" id="WP_002551707.1">
    <property type="nucleotide sequence ID" value="NC_005773.3"/>
</dbReference>
<dbReference type="SMR" id="Q48PB8"/>
<dbReference type="KEGG" id="psp:PSPPH_0448"/>
<dbReference type="eggNOG" id="COG2353">
    <property type="taxonomic scope" value="Bacteria"/>
</dbReference>
<dbReference type="HOGENOM" id="CLU_071003_1_2_6"/>
<dbReference type="Proteomes" id="UP000000551">
    <property type="component" value="Chromosome"/>
</dbReference>
<dbReference type="GO" id="GO:0042597">
    <property type="term" value="C:periplasmic space"/>
    <property type="evidence" value="ECO:0007669"/>
    <property type="project" value="UniProtKB-SubCell"/>
</dbReference>
<dbReference type="Gene3D" id="2.40.128.110">
    <property type="entry name" value="Lipid/polyisoprenoid-binding, YceI-like"/>
    <property type="match status" value="1"/>
</dbReference>
<dbReference type="HAMAP" id="MF_00780">
    <property type="entry name" value="UPF0312"/>
    <property type="match status" value="1"/>
</dbReference>
<dbReference type="InterPro" id="IPR007372">
    <property type="entry name" value="Lipid/polyisoprenoid-bd_YceI"/>
</dbReference>
<dbReference type="InterPro" id="IPR036761">
    <property type="entry name" value="TTHA0802/YceI-like_sf"/>
</dbReference>
<dbReference type="InterPro" id="IPR023480">
    <property type="entry name" value="UPF0312/YceI"/>
</dbReference>
<dbReference type="NCBIfam" id="NF002994">
    <property type="entry name" value="PRK03757.1"/>
    <property type="match status" value="1"/>
</dbReference>
<dbReference type="PANTHER" id="PTHR34406">
    <property type="entry name" value="PROTEIN YCEI"/>
    <property type="match status" value="1"/>
</dbReference>
<dbReference type="PANTHER" id="PTHR34406:SF1">
    <property type="entry name" value="PROTEIN YCEI"/>
    <property type="match status" value="1"/>
</dbReference>
<dbReference type="Pfam" id="PF04264">
    <property type="entry name" value="YceI"/>
    <property type="match status" value="1"/>
</dbReference>
<dbReference type="SMART" id="SM00867">
    <property type="entry name" value="YceI"/>
    <property type="match status" value="1"/>
</dbReference>
<dbReference type="SUPFAM" id="SSF101874">
    <property type="entry name" value="YceI-like"/>
    <property type="match status" value="1"/>
</dbReference>
<gene>
    <name type="ordered locus">PSPPH_0448</name>
</gene>
<sequence>MLKKSLAALALGTALLSAGQAMAADYVIDKEGQHAFVDFKISHLGYSFIHGTFKDWDGTFSFDAAKPEASKINVELKTASLFTNHAERDKHISSKDFLDVAKYPEAKFVSTAVKSTGEKTADVTGDLTLHGVTKPIVIKATFNGEGKDPWGGYRAGFNGTSTLNLNDFGIKGPGPTSQTLDLDISFEGVQKK</sequence>
<evidence type="ECO:0000255" key="1">
    <source>
        <dbReference type="HAMAP-Rule" id="MF_00780"/>
    </source>
</evidence>
<reference key="1">
    <citation type="journal article" date="2005" name="J. Bacteriol.">
        <title>Whole-genome sequence analysis of Pseudomonas syringae pv. phaseolicola 1448A reveals divergence among pathovars in genes involved in virulence and transposition.</title>
        <authorList>
            <person name="Joardar V."/>
            <person name="Lindeberg M."/>
            <person name="Jackson R.W."/>
            <person name="Selengut J."/>
            <person name="Dodson R."/>
            <person name="Brinkac L.M."/>
            <person name="Daugherty S.C."/>
            <person name="DeBoy R.T."/>
            <person name="Durkin A.S."/>
            <person name="Gwinn Giglio M."/>
            <person name="Madupu R."/>
            <person name="Nelson W.C."/>
            <person name="Rosovitz M.J."/>
            <person name="Sullivan S.A."/>
            <person name="Crabtree J."/>
            <person name="Creasy T."/>
            <person name="Davidsen T.M."/>
            <person name="Haft D.H."/>
            <person name="Zafar N."/>
            <person name="Zhou L."/>
            <person name="Halpin R."/>
            <person name="Holley T."/>
            <person name="Khouri H.M."/>
            <person name="Feldblyum T.V."/>
            <person name="White O."/>
            <person name="Fraser C.M."/>
            <person name="Chatterjee A.K."/>
            <person name="Cartinhour S."/>
            <person name="Schneider D."/>
            <person name="Mansfield J.W."/>
            <person name="Collmer A."/>
            <person name="Buell R."/>
        </authorList>
    </citation>
    <scope>NUCLEOTIDE SEQUENCE [LARGE SCALE GENOMIC DNA]</scope>
    <source>
        <strain>1448A / Race 6</strain>
    </source>
</reference>
<keyword id="KW-0574">Periplasm</keyword>
<keyword id="KW-0732">Signal</keyword>
<accession>Q48PB8</accession>
<feature type="signal peptide" evidence="1">
    <location>
        <begin position="1"/>
        <end position="23"/>
    </location>
</feature>
<feature type="chain" id="PRO_0000226321" description="UPF0312 protein PSPPH_0448">
    <location>
        <begin position="24"/>
        <end position="192"/>
    </location>
</feature>
<protein>
    <recommendedName>
        <fullName evidence="1">UPF0312 protein PSPPH_0448</fullName>
    </recommendedName>
</protein>
<organism>
    <name type="scientific">Pseudomonas savastanoi pv. phaseolicola (strain 1448A / Race 6)</name>
    <name type="common">Pseudomonas syringae pv. phaseolicola (strain 1448A / Race 6)</name>
    <dbReference type="NCBI Taxonomy" id="264730"/>
    <lineage>
        <taxon>Bacteria</taxon>
        <taxon>Pseudomonadati</taxon>
        <taxon>Pseudomonadota</taxon>
        <taxon>Gammaproteobacteria</taxon>
        <taxon>Pseudomonadales</taxon>
        <taxon>Pseudomonadaceae</taxon>
        <taxon>Pseudomonas</taxon>
    </lineage>
</organism>
<name>Y448_PSE14</name>
<comment type="subcellular location">
    <subcellularLocation>
        <location evidence="1">Periplasm</location>
    </subcellularLocation>
</comment>
<comment type="similarity">
    <text evidence="1">Belongs to the UPF0312 family. Type 1 subfamily.</text>
</comment>
<proteinExistence type="inferred from homology"/>